<reference key="1">
    <citation type="journal article" date="1980" name="Proc. Natl. Acad. Sci. U.S.A.">
        <title>Sequences of two kinetoplast DNA minicircles of Tryptanosoma brucei.</title>
        <authorList>
            <person name="Chen K.K."/>
            <person name="Donelson J.E."/>
        </authorList>
    </citation>
    <scope>NUCLEOTIDE SEQUENCE [GENOMIC DNA] (1.0-KB KINETOPLAST)</scope>
</reference>
<proteinExistence type="predicted"/>
<sequence length="53" mass="6102">MGVQISPYTNPVLFWGVFEVRGTSKGVGVILTRFFLEIFMILVFVGFETRCLW</sequence>
<protein>
    <recommendedName>
        <fullName>Uncharacterized kinetoplast minicircle 201 polypeptide</fullName>
    </recommendedName>
</protein>
<name>YKM1_TRYBB</name>
<geneLocation type="mitochondrion"/>
<keyword id="KW-0419">Kinetoplast</keyword>
<keyword id="KW-0496">Mitochondrion</keyword>
<accession>P02900</accession>
<comment type="subcellular location">
    <subcellularLocation>
        <location>Mitochondrion matrix</location>
        <location>Kinetoplast</location>
    </subcellularLocation>
</comment>
<feature type="chain" id="PRO_0000196903" description="Uncharacterized kinetoplast minicircle 201 polypeptide">
    <location>
        <begin position="1"/>
        <end position="53"/>
    </location>
</feature>
<dbReference type="EMBL" id="V01388">
    <property type="protein sequence ID" value="CAA24678.1"/>
    <property type="status" value="ALT_TERM"/>
    <property type="molecule type" value="Genomic_DNA"/>
</dbReference>
<dbReference type="SMR" id="P02900"/>
<dbReference type="GO" id="GO:0020023">
    <property type="term" value="C:kinetoplast"/>
    <property type="evidence" value="ECO:0007669"/>
    <property type="project" value="UniProtKB-SubCell"/>
</dbReference>
<dbReference type="InterPro" id="IPR007429">
    <property type="entry name" value="DUF478"/>
</dbReference>
<dbReference type="Pfam" id="PF04334">
    <property type="entry name" value="DUF478"/>
    <property type="match status" value="1"/>
</dbReference>
<organism>
    <name type="scientific">Trypanosoma brucei brucei</name>
    <dbReference type="NCBI Taxonomy" id="5702"/>
    <lineage>
        <taxon>Eukaryota</taxon>
        <taxon>Discoba</taxon>
        <taxon>Euglenozoa</taxon>
        <taxon>Kinetoplastea</taxon>
        <taxon>Metakinetoplastina</taxon>
        <taxon>Trypanosomatida</taxon>
        <taxon>Trypanosomatidae</taxon>
        <taxon>Trypanosoma</taxon>
    </lineage>
</organism>